<reference key="1">
    <citation type="journal article" date="1992" name="J. Bacteriol.">
        <title>Nucleotide sequencing and transcriptional mapping of the genes encoding biphenyl dioxygenase, a multicomponent polychlorinated-biphenyl-degrading enzyme in Pseudomonas strain LB400.</title>
        <authorList>
            <person name="Erickson B.D."/>
            <person name="Mondello F.J."/>
        </authorList>
    </citation>
    <scope>NUCLEOTIDE SEQUENCE [GENOMIC DNA]</scope>
</reference>
<reference key="2">
    <citation type="journal article" date="2006" name="Proc. Natl. Acad. Sci. U.S.A.">
        <title>Burkholderia xenovorans LB400 harbors a multi-replicon, 9.73-Mbp genome shaped for versatility.</title>
        <authorList>
            <person name="Chain P.S.G."/>
            <person name="Denef V.J."/>
            <person name="Konstantinidis K.T."/>
            <person name="Vergez L.M."/>
            <person name="Agullo L."/>
            <person name="Reyes V.L."/>
            <person name="Hauser L."/>
            <person name="Cordova M."/>
            <person name="Gomez L."/>
            <person name="Gonzalez M."/>
            <person name="Land M."/>
            <person name="Lao V."/>
            <person name="Larimer F."/>
            <person name="LiPuma J.J."/>
            <person name="Mahenthiralingam E."/>
            <person name="Malfatti S.A."/>
            <person name="Marx C.J."/>
            <person name="Parnell J.J."/>
            <person name="Ramette A."/>
            <person name="Richardson P."/>
            <person name="Seeger M."/>
            <person name="Smith D."/>
            <person name="Spilker T."/>
            <person name="Sul W.J."/>
            <person name="Tsoi T.V."/>
            <person name="Ulrich L.E."/>
            <person name="Zhulin I.B."/>
            <person name="Tiedje J.M."/>
        </authorList>
    </citation>
    <scope>NUCLEOTIDE SEQUENCE [LARGE SCALE GENOMIC DNA]</scope>
    <source>
        <strain>LB400</strain>
    </source>
</reference>
<dbReference type="EMBL" id="M86348">
    <property type="protein sequence ID" value="AAB63424.1"/>
    <property type="molecule type" value="Genomic_DNA"/>
</dbReference>
<dbReference type="EMBL" id="CP000272">
    <property type="protein sequence ID" value="ABE37060.1"/>
    <property type="molecule type" value="Genomic_DNA"/>
</dbReference>
<dbReference type="RefSeq" id="WP_011494300.1">
    <property type="nucleotide sequence ID" value="NZ_CP008761.1"/>
</dbReference>
<dbReference type="SMR" id="P37335"/>
<dbReference type="STRING" id="266265.Bxe_C1198"/>
<dbReference type="KEGG" id="bxb:DR64_8607"/>
<dbReference type="KEGG" id="bxe:Bxe_C1198"/>
<dbReference type="eggNOG" id="COG1802">
    <property type="taxonomic scope" value="Bacteria"/>
</dbReference>
<dbReference type="OrthoDB" id="9799812at2"/>
<dbReference type="Proteomes" id="UP000001817">
    <property type="component" value="Chromosome 3"/>
</dbReference>
<dbReference type="GO" id="GO:0003677">
    <property type="term" value="F:DNA binding"/>
    <property type="evidence" value="ECO:0007669"/>
    <property type="project" value="UniProtKB-KW"/>
</dbReference>
<dbReference type="GO" id="GO:0003700">
    <property type="term" value="F:DNA-binding transcription factor activity"/>
    <property type="evidence" value="ECO:0007669"/>
    <property type="project" value="InterPro"/>
</dbReference>
<dbReference type="Gene3D" id="1.20.120.530">
    <property type="entry name" value="GntR ligand-binding domain-like"/>
    <property type="match status" value="1"/>
</dbReference>
<dbReference type="Gene3D" id="1.10.10.10">
    <property type="entry name" value="Winged helix-like DNA-binding domain superfamily/Winged helix DNA-binding domain"/>
    <property type="match status" value="1"/>
</dbReference>
<dbReference type="InterPro" id="IPR011711">
    <property type="entry name" value="GntR_C"/>
</dbReference>
<dbReference type="InterPro" id="IPR008920">
    <property type="entry name" value="TF_FadR/GntR_C"/>
</dbReference>
<dbReference type="InterPro" id="IPR000524">
    <property type="entry name" value="Tscrpt_reg_HTH_GntR"/>
</dbReference>
<dbReference type="InterPro" id="IPR036388">
    <property type="entry name" value="WH-like_DNA-bd_sf"/>
</dbReference>
<dbReference type="InterPro" id="IPR036390">
    <property type="entry name" value="WH_DNA-bd_sf"/>
</dbReference>
<dbReference type="PANTHER" id="PTHR43537:SF20">
    <property type="entry name" value="HTH-TYPE TRANSCRIPTIONAL REPRESSOR GLAR"/>
    <property type="match status" value="1"/>
</dbReference>
<dbReference type="PANTHER" id="PTHR43537">
    <property type="entry name" value="TRANSCRIPTIONAL REGULATOR, GNTR FAMILY"/>
    <property type="match status" value="1"/>
</dbReference>
<dbReference type="Pfam" id="PF07729">
    <property type="entry name" value="FCD"/>
    <property type="match status" value="1"/>
</dbReference>
<dbReference type="Pfam" id="PF00392">
    <property type="entry name" value="GntR"/>
    <property type="match status" value="1"/>
</dbReference>
<dbReference type="SMART" id="SM00895">
    <property type="entry name" value="FCD"/>
    <property type="match status" value="1"/>
</dbReference>
<dbReference type="SMART" id="SM00345">
    <property type="entry name" value="HTH_GNTR"/>
    <property type="match status" value="1"/>
</dbReference>
<dbReference type="SUPFAM" id="SSF48008">
    <property type="entry name" value="GntR ligand-binding domain-like"/>
    <property type="match status" value="1"/>
</dbReference>
<dbReference type="SUPFAM" id="SSF46785">
    <property type="entry name" value="Winged helix' DNA-binding domain"/>
    <property type="match status" value="1"/>
</dbReference>
<dbReference type="PROSITE" id="PS50949">
    <property type="entry name" value="HTH_GNTR"/>
    <property type="match status" value="1"/>
</dbReference>
<gene>
    <name type="primary">bphR</name>
    <name type="ordered locus">Bxeno_C1132</name>
    <name type="ORF">Bxe_C1198</name>
</gene>
<protein>
    <recommendedName>
        <fullName>Uncharacterized HTH-type transcriptional regulator BphR</fullName>
    </recommendedName>
</protein>
<sequence length="245" mass="27785">MNARTPNSLTMGGDKSFADASPVPIANVRSLIEATFQRLRADIVEGRLAAGSRLAIEDLKSRYEVSGGTVREALSLLVANNLVQTQAQRGFHVTPMSLDDMRDLAATRIALECEALRQSVLNGDAEWEARVVSSYHRLSLLDERTMRDPVHLFNQWEQANRDFHEALISACSSAWTQRFLSILYLQMERYRRLTAMHNRPARNVHEEHLALRDSALARDAERCTELLRMHIESSISVVRQFGLLR</sequence>
<feature type="chain" id="PRO_0000050706" description="Uncharacterized HTH-type transcriptional regulator BphR">
    <location>
        <begin position="1"/>
        <end position="245"/>
    </location>
</feature>
<feature type="domain" description="HTH gntR-type" evidence="1">
    <location>
        <begin position="29"/>
        <end position="96"/>
    </location>
</feature>
<feature type="DNA-binding region" description="H-T-H motif" evidence="1">
    <location>
        <begin position="56"/>
        <end position="75"/>
    </location>
</feature>
<name>BPHR_PARXL</name>
<keyword id="KW-0238">DNA-binding</keyword>
<keyword id="KW-1185">Reference proteome</keyword>
<keyword id="KW-0804">Transcription</keyword>
<keyword id="KW-0805">Transcription regulation</keyword>
<organism>
    <name type="scientific">Paraburkholderia xenovorans (strain LB400)</name>
    <dbReference type="NCBI Taxonomy" id="266265"/>
    <lineage>
        <taxon>Bacteria</taxon>
        <taxon>Pseudomonadati</taxon>
        <taxon>Pseudomonadota</taxon>
        <taxon>Betaproteobacteria</taxon>
        <taxon>Burkholderiales</taxon>
        <taxon>Burkholderiaceae</taxon>
        <taxon>Paraburkholderia</taxon>
    </lineage>
</organism>
<evidence type="ECO:0000255" key="1">
    <source>
        <dbReference type="PROSITE-ProRule" id="PRU00307"/>
    </source>
</evidence>
<proteinExistence type="predicted"/>
<accession>P37335</accession>
<accession>Q13FS9</accession>